<feature type="chain" id="PRO_0000204589" description="DNA polymerase III PolC-type">
    <location>
        <begin position="1"/>
        <end position="1438"/>
    </location>
</feature>
<feature type="domain" description="Exonuclease">
    <location>
        <begin position="422"/>
        <end position="578"/>
    </location>
</feature>
<name>DPO3_STAAR</name>
<keyword id="KW-0963">Cytoplasm</keyword>
<keyword id="KW-0235">DNA replication</keyword>
<keyword id="KW-0239">DNA-directed DNA polymerase</keyword>
<keyword id="KW-0269">Exonuclease</keyword>
<keyword id="KW-0378">Hydrolase</keyword>
<keyword id="KW-0540">Nuclease</keyword>
<keyword id="KW-0548">Nucleotidyltransferase</keyword>
<keyword id="KW-0808">Transferase</keyword>
<organism>
    <name type="scientific">Staphylococcus aureus (strain MRSA252)</name>
    <dbReference type="NCBI Taxonomy" id="282458"/>
    <lineage>
        <taxon>Bacteria</taxon>
        <taxon>Bacillati</taxon>
        <taxon>Bacillota</taxon>
        <taxon>Bacilli</taxon>
        <taxon>Bacillales</taxon>
        <taxon>Staphylococcaceae</taxon>
        <taxon>Staphylococcus</taxon>
    </lineage>
</organism>
<dbReference type="EC" id="2.7.7.7" evidence="1"/>
<dbReference type="EMBL" id="BX571856">
    <property type="protein sequence ID" value="CAG40242.1"/>
    <property type="molecule type" value="Genomic_DNA"/>
</dbReference>
<dbReference type="SMR" id="Q6GHH1"/>
<dbReference type="KEGG" id="sar:SAR1240"/>
<dbReference type="HOGENOM" id="CLU_003297_2_0_9"/>
<dbReference type="Proteomes" id="UP000000596">
    <property type="component" value="Chromosome"/>
</dbReference>
<dbReference type="GO" id="GO:0005737">
    <property type="term" value="C:cytoplasm"/>
    <property type="evidence" value="ECO:0007669"/>
    <property type="project" value="UniProtKB-SubCell"/>
</dbReference>
<dbReference type="GO" id="GO:0008408">
    <property type="term" value="F:3'-5' exonuclease activity"/>
    <property type="evidence" value="ECO:0007669"/>
    <property type="project" value="UniProtKB-UniRule"/>
</dbReference>
<dbReference type="GO" id="GO:0003677">
    <property type="term" value="F:DNA binding"/>
    <property type="evidence" value="ECO:0007669"/>
    <property type="project" value="UniProtKB-UniRule"/>
</dbReference>
<dbReference type="GO" id="GO:0003887">
    <property type="term" value="F:DNA-directed DNA polymerase activity"/>
    <property type="evidence" value="ECO:0007669"/>
    <property type="project" value="UniProtKB-UniRule"/>
</dbReference>
<dbReference type="GO" id="GO:0006261">
    <property type="term" value="P:DNA-templated DNA replication"/>
    <property type="evidence" value="ECO:0007669"/>
    <property type="project" value="UniProtKB-UniRule"/>
</dbReference>
<dbReference type="CDD" id="cd06127">
    <property type="entry name" value="DEDDh"/>
    <property type="match status" value="1"/>
</dbReference>
<dbReference type="CDD" id="cd07435">
    <property type="entry name" value="PHP_PolIIIA_POLC"/>
    <property type="match status" value="1"/>
</dbReference>
<dbReference type="CDD" id="cd04484">
    <property type="entry name" value="polC_OBF"/>
    <property type="match status" value="1"/>
</dbReference>
<dbReference type="FunFam" id="3.30.420.10:FF:000045">
    <property type="entry name" value="3'-5' exonuclease DinG"/>
    <property type="match status" value="1"/>
</dbReference>
<dbReference type="Gene3D" id="1.10.150.870">
    <property type="match status" value="1"/>
</dbReference>
<dbReference type="Gene3D" id="3.30.1900.20">
    <property type="match status" value="2"/>
</dbReference>
<dbReference type="Gene3D" id="6.10.140.1510">
    <property type="match status" value="1"/>
</dbReference>
<dbReference type="Gene3D" id="3.20.20.140">
    <property type="entry name" value="Metal-dependent hydrolases"/>
    <property type="match status" value="1"/>
</dbReference>
<dbReference type="Gene3D" id="2.40.50.140">
    <property type="entry name" value="Nucleic acid-binding proteins"/>
    <property type="match status" value="1"/>
</dbReference>
<dbReference type="Gene3D" id="1.10.150.700">
    <property type="entry name" value="PolC, middle finger domain"/>
    <property type="match status" value="1"/>
</dbReference>
<dbReference type="Gene3D" id="3.30.420.10">
    <property type="entry name" value="Ribonuclease H-like superfamily/Ribonuclease H"/>
    <property type="match status" value="1"/>
</dbReference>
<dbReference type="HAMAP" id="MF_00356">
    <property type="entry name" value="DNApol_PolC"/>
    <property type="match status" value="1"/>
</dbReference>
<dbReference type="InterPro" id="IPR011708">
    <property type="entry name" value="DNA_pol3_alpha_NTPase_dom"/>
</dbReference>
<dbReference type="InterPro" id="IPR040982">
    <property type="entry name" value="DNA_pol3_finger"/>
</dbReference>
<dbReference type="InterPro" id="IPR024754">
    <property type="entry name" value="DNA_PolC-like_N_II"/>
</dbReference>
<dbReference type="InterPro" id="IPR028112">
    <property type="entry name" value="DNA_PolC-type_N_I"/>
</dbReference>
<dbReference type="InterPro" id="IPR004805">
    <property type="entry name" value="DnaE2/DnaE/PolC"/>
</dbReference>
<dbReference type="InterPro" id="IPR029460">
    <property type="entry name" value="DNAPol_HHH"/>
</dbReference>
<dbReference type="InterPro" id="IPR006054">
    <property type="entry name" value="DnaQ"/>
</dbReference>
<dbReference type="InterPro" id="IPR013520">
    <property type="entry name" value="Exonuclease_RNaseT/DNA_pol3"/>
</dbReference>
<dbReference type="InterPro" id="IPR012340">
    <property type="entry name" value="NA-bd_OB-fold"/>
</dbReference>
<dbReference type="InterPro" id="IPR004013">
    <property type="entry name" value="PHP_dom"/>
</dbReference>
<dbReference type="InterPro" id="IPR003141">
    <property type="entry name" value="Pol/His_phosphatase_N"/>
</dbReference>
<dbReference type="InterPro" id="IPR006308">
    <property type="entry name" value="Pol_III_a_PolC-type_gram_pos"/>
</dbReference>
<dbReference type="InterPro" id="IPR044923">
    <property type="entry name" value="PolC_middle_finger_sf"/>
</dbReference>
<dbReference type="InterPro" id="IPR012337">
    <property type="entry name" value="RNaseH-like_sf"/>
</dbReference>
<dbReference type="InterPro" id="IPR036397">
    <property type="entry name" value="RNaseH_sf"/>
</dbReference>
<dbReference type="NCBIfam" id="TIGR00573">
    <property type="entry name" value="dnaq"/>
    <property type="match status" value="1"/>
</dbReference>
<dbReference type="NCBIfam" id="TIGR01405">
    <property type="entry name" value="polC_Gram_pos"/>
    <property type="match status" value="1"/>
</dbReference>
<dbReference type="NCBIfam" id="NF001688">
    <property type="entry name" value="PRK00448.1"/>
    <property type="match status" value="1"/>
</dbReference>
<dbReference type="PANTHER" id="PTHR32294:SF5">
    <property type="entry name" value="DNA POLYMERASE III POLC-TYPE"/>
    <property type="match status" value="1"/>
</dbReference>
<dbReference type="PANTHER" id="PTHR32294">
    <property type="entry name" value="DNA POLYMERASE III SUBUNIT ALPHA"/>
    <property type="match status" value="1"/>
</dbReference>
<dbReference type="Pfam" id="PF14480">
    <property type="entry name" value="DNA_pol3_a_NI"/>
    <property type="match status" value="1"/>
</dbReference>
<dbReference type="Pfam" id="PF11490">
    <property type="entry name" value="DNA_pol3_a_NII"/>
    <property type="match status" value="1"/>
</dbReference>
<dbReference type="Pfam" id="PF07733">
    <property type="entry name" value="DNA_pol3_alpha"/>
    <property type="match status" value="2"/>
</dbReference>
<dbReference type="Pfam" id="PF17657">
    <property type="entry name" value="DNA_pol3_finger"/>
    <property type="match status" value="1"/>
</dbReference>
<dbReference type="Pfam" id="PF14579">
    <property type="entry name" value="HHH_6"/>
    <property type="match status" value="1"/>
</dbReference>
<dbReference type="Pfam" id="PF02811">
    <property type="entry name" value="PHP"/>
    <property type="match status" value="2"/>
</dbReference>
<dbReference type="Pfam" id="PF00929">
    <property type="entry name" value="RNase_T"/>
    <property type="match status" value="1"/>
</dbReference>
<dbReference type="SMART" id="SM00479">
    <property type="entry name" value="EXOIII"/>
    <property type="match status" value="1"/>
</dbReference>
<dbReference type="SMART" id="SM00481">
    <property type="entry name" value="POLIIIAc"/>
    <property type="match status" value="1"/>
</dbReference>
<dbReference type="SUPFAM" id="SSF81585">
    <property type="entry name" value="PsbU/PolX domain-like"/>
    <property type="match status" value="1"/>
</dbReference>
<dbReference type="SUPFAM" id="SSF53098">
    <property type="entry name" value="Ribonuclease H-like"/>
    <property type="match status" value="1"/>
</dbReference>
<protein>
    <recommendedName>
        <fullName evidence="1">DNA polymerase III PolC-type</fullName>
        <shortName evidence="1">PolIII</shortName>
        <ecNumber evidence="1">2.7.7.7</ecNumber>
    </recommendedName>
</protein>
<accession>Q6GHH1</accession>
<proteinExistence type="inferred from homology"/>
<evidence type="ECO:0000255" key="1">
    <source>
        <dbReference type="HAMAP-Rule" id="MF_00356"/>
    </source>
</evidence>
<sequence>MAMTEQQKFKVLADQIKISNQLDAEILNSGELTRIDVSNKNRTWEFHITLPQFLAHEDYLLFINAIEQEFKDIANVTCRFTVTNGTNQDEHAIKYFGHCIDQTALSPKVKGQLKQKKLIMSGKVLKVMVSNDIERNHFDKACNGSLIKAFRNCGFDIDKIIFETNDNDQEQNLASLEAHIQEEDEQSARLATEKLEKMKAEKSKQQDNNESAVDKCQIGKPIQIENIKPIESIIEEEYKVAIEGVIFDINLKELKSGRHIVEIKVTDYTDSLVLKMFTRKNKDDLEHFKALSVGKWVRAQGRIEEDTFIRDLVMMMSDIEEIKKATKKDKAEEKRVEFHLHTAMSQMDGIPNIGAYVKQAADWGHPAIAVTDHNVVQAFPDAHAAAEKHGIKMIYGMEGMLVDDGVPIAYKPQDVVLKDATYVVFDVETTGLSNQYDKIIELAAVKVHNGEIIDKFERFSNPHERLSETIINLTHITDDMLVDAPEIEEVLTEFKEWVGDAIFVAHNASFDMGFIDTGYERLGFGPSTNGVIDTLELSRTINTEYGKHGLNFLAKKYGVELTQHHRAIYDTEATAYIFIKMVQQMKELGVLNHNEINKKLSNEDAYKRARPSHVTLIVQNQQGLKNLFKIVSASLVKYFYRTPRIPRSLLDEYREGLLVGTACDEGELFTAVMQKDQSQVEKIAKYYDFIEIQPPALYQDLIDRELIRDTETLHEIYQRLIHAGDTAGIPVIATGNAHYLFEHDGIARKILIASQPGNPLNRSTLPEAHFRTTDEMLNEFHFLGEEKAHEIVVKNTNELADRIERVVPIKDELYTPRMEGANEEIRELSYANARKLYGEDLPQIVIDRLEKELKSIIGNGFAVIYLISQRLVKKSLDDGYLVGSRGSVGSSFVATMTEITEVNPLPPHYICPNCKTSEFFNDGSVGSGFDLPDKTCETCGAPLIKEGQDIPFETFLGFKGDKVPDIDLNFSGEYQPNAHNYTKVLFGEDKVFRAGTIGTVAEKTAFGYVKGYLNDQGIHKRGAEIDRLVKGCTGVKRTTGQHPGGIIVVPDYMDIYDFTPIQYPADDQNSAWMTTHFDFHSIHDNVLKLDILGHDDPTMIRMLQDLSGIDPKTIPVDDKEVMQIFSTPESLGVTEDEILCKTGTFGVPEFGTGFVRQMLEDTKPTTFSELVQISGLSHGTDVWLGNAQELIKTGICDLSSVIGCRDDIMVYLMYAGLEPSMAFKIMESVRKGKGLTEEMIETMKENEVPDWYLDSCLKIKYMFPKAHAAAYVLMAVRIAYFKVHHPLYYYASYFTIRASDFDLITMIKDKTSIRNTVKDMYSRYMDLGKKEKDVLTVLEIMNEMAHRGYRMQPISLEKSQAFEFIIEGETLIPPFISVPGLGENVAKRIVEARDDGPFLSKEDLNKKAGLSQKIIEYLDELGSLPNLPDKAQLSIFDM</sequence>
<gene>
    <name evidence="1" type="primary">polC</name>
    <name type="ordered locus">SAR1240</name>
</gene>
<reference key="1">
    <citation type="journal article" date="2004" name="Proc. Natl. Acad. Sci. U.S.A.">
        <title>Complete genomes of two clinical Staphylococcus aureus strains: evidence for the rapid evolution of virulence and drug resistance.</title>
        <authorList>
            <person name="Holden M.T.G."/>
            <person name="Feil E.J."/>
            <person name="Lindsay J.A."/>
            <person name="Peacock S.J."/>
            <person name="Day N.P.J."/>
            <person name="Enright M.C."/>
            <person name="Foster T.J."/>
            <person name="Moore C.E."/>
            <person name="Hurst L."/>
            <person name="Atkin R."/>
            <person name="Barron A."/>
            <person name="Bason N."/>
            <person name="Bentley S.D."/>
            <person name="Chillingworth C."/>
            <person name="Chillingworth T."/>
            <person name="Churcher C."/>
            <person name="Clark L."/>
            <person name="Corton C."/>
            <person name="Cronin A."/>
            <person name="Doggett J."/>
            <person name="Dowd L."/>
            <person name="Feltwell T."/>
            <person name="Hance Z."/>
            <person name="Harris B."/>
            <person name="Hauser H."/>
            <person name="Holroyd S."/>
            <person name="Jagels K."/>
            <person name="James K.D."/>
            <person name="Lennard N."/>
            <person name="Line A."/>
            <person name="Mayes R."/>
            <person name="Moule S."/>
            <person name="Mungall K."/>
            <person name="Ormond D."/>
            <person name="Quail M.A."/>
            <person name="Rabbinowitsch E."/>
            <person name="Rutherford K.M."/>
            <person name="Sanders M."/>
            <person name="Sharp S."/>
            <person name="Simmonds M."/>
            <person name="Stevens K."/>
            <person name="Whitehead S."/>
            <person name="Barrell B.G."/>
            <person name="Spratt B.G."/>
            <person name="Parkhill J."/>
        </authorList>
    </citation>
    <scope>NUCLEOTIDE SEQUENCE [LARGE SCALE GENOMIC DNA]</scope>
    <source>
        <strain>MRSA252</strain>
    </source>
</reference>
<comment type="function">
    <text evidence="1">Required for replicative DNA synthesis. This DNA polymerase also exhibits 3' to 5' exonuclease activity.</text>
</comment>
<comment type="catalytic activity">
    <reaction evidence="1">
        <text>DNA(n) + a 2'-deoxyribonucleoside 5'-triphosphate = DNA(n+1) + diphosphate</text>
        <dbReference type="Rhea" id="RHEA:22508"/>
        <dbReference type="Rhea" id="RHEA-COMP:17339"/>
        <dbReference type="Rhea" id="RHEA-COMP:17340"/>
        <dbReference type="ChEBI" id="CHEBI:33019"/>
        <dbReference type="ChEBI" id="CHEBI:61560"/>
        <dbReference type="ChEBI" id="CHEBI:173112"/>
        <dbReference type="EC" id="2.7.7.7"/>
    </reaction>
</comment>
<comment type="subcellular location">
    <subcellularLocation>
        <location evidence="1">Cytoplasm</location>
    </subcellularLocation>
</comment>
<comment type="similarity">
    <text evidence="1">Belongs to the DNA polymerase type-C family. PolC subfamily.</text>
</comment>